<sequence>MQTYDAGTFDVIVVGAGHAGVEAGLASGRMGAKTLMLTINLDMVAFMPCNPSVGGPAKGVVVREIDALGGEMGRNTDKTYIQMRMLNTGKGPAVRALRAQADKWDYQHEMKHTIEKEENITLRQGLVDRLVIEDGVCKGVITNSGAIYYAKTVVITTGTFSRGEIIVGELRYSSGPNNQQPSVKLSEHLEELGFELRRFKTGTPPRVKSSTIDYSKTEEQPGDDHPRAFSFDTVEMLLDQLPCWLTYTNETTHEIIQANLHRSPMFTATKKGTGARYCPSIEDKIVRFSDKPRHQIFLEPEGKNTEEVYVQGLSTSLPEEVQREMLRTIPGLENVEMMRVGYAIEYDAVMPDQLWPSLETKLVEGLFTAGQINGTSGYEEAAGQGLMAGINAARKVFEKEPVILGRDQAYIGVLIDDLVTKGTEEPYRLLTSRAEYRLLLRHDNADLRLTEIGHEIGLISDERYERFLAKQSAIEAEKERLQKTRIKPTAEVQAMLKEIGSGELKDGILAADLLRRPEITYDKIAQIVSRETFVTDEIAEQVEIQIKYEGYIQKSNLQVEKMKRMEDKKIPENIDYDAISGLATEALEKLKKIEPLSIAQASRISGVNPADISILLVYIEQGKIAKISK</sequence>
<keyword id="KW-0963">Cytoplasm</keyword>
<keyword id="KW-0274">FAD</keyword>
<keyword id="KW-0285">Flavoprotein</keyword>
<keyword id="KW-0520">NAD</keyword>
<keyword id="KW-1185">Reference proteome</keyword>
<keyword id="KW-0819">tRNA processing</keyword>
<dbReference type="EMBL" id="AL591984">
    <property type="protein sequence ID" value="CAD01023.1"/>
    <property type="molecule type" value="Genomic_DNA"/>
</dbReference>
<dbReference type="PIR" id="AI1425">
    <property type="entry name" value="AI1425"/>
</dbReference>
<dbReference type="RefSeq" id="NP_466332.1">
    <property type="nucleotide sequence ID" value="NC_003210.1"/>
</dbReference>
<dbReference type="RefSeq" id="WP_003725839.1">
    <property type="nucleotide sequence ID" value="NZ_CP149495.1"/>
</dbReference>
<dbReference type="SMR" id="Q8Y3M5"/>
<dbReference type="STRING" id="169963.gene:17595527"/>
<dbReference type="PaxDb" id="169963-lmo2810"/>
<dbReference type="EnsemblBacteria" id="CAD01023">
    <property type="protein sequence ID" value="CAD01023"/>
    <property type="gene ID" value="CAD01023"/>
</dbReference>
<dbReference type="GeneID" id="986685"/>
<dbReference type="KEGG" id="lmo:lmo2810"/>
<dbReference type="PATRIC" id="fig|169963.11.peg.2881"/>
<dbReference type="eggNOG" id="COG0445">
    <property type="taxonomic scope" value="Bacteria"/>
</dbReference>
<dbReference type="HOGENOM" id="CLU_007831_2_2_9"/>
<dbReference type="OrthoDB" id="9815560at2"/>
<dbReference type="PhylomeDB" id="Q8Y3M5"/>
<dbReference type="BioCyc" id="LMON169963:LMO2810-MONOMER"/>
<dbReference type="Proteomes" id="UP000000817">
    <property type="component" value="Chromosome"/>
</dbReference>
<dbReference type="GO" id="GO:0005829">
    <property type="term" value="C:cytosol"/>
    <property type="evidence" value="ECO:0000318"/>
    <property type="project" value="GO_Central"/>
</dbReference>
<dbReference type="GO" id="GO:0050660">
    <property type="term" value="F:flavin adenine dinucleotide binding"/>
    <property type="evidence" value="ECO:0000318"/>
    <property type="project" value="GO_Central"/>
</dbReference>
<dbReference type="GO" id="GO:0030488">
    <property type="term" value="P:tRNA methylation"/>
    <property type="evidence" value="ECO:0000318"/>
    <property type="project" value="GO_Central"/>
</dbReference>
<dbReference type="GO" id="GO:0002098">
    <property type="term" value="P:tRNA wobble uridine modification"/>
    <property type="evidence" value="ECO:0000318"/>
    <property type="project" value="GO_Central"/>
</dbReference>
<dbReference type="FunFam" id="1.10.10.1800:FF:000001">
    <property type="entry name" value="tRNA uridine 5-carboxymethylaminomethyl modification enzyme MnmG"/>
    <property type="match status" value="1"/>
</dbReference>
<dbReference type="FunFam" id="1.10.150.570:FF:000001">
    <property type="entry name" value="tRNA uridine 5-carboxymethylaminomethyl modification enzyme MnmG"/>
    <property type="match status" value="1"/>
</dbReference>
<dbReference type="FunFam" id="3.50.50.60:FF:000002">
    <property type="entry name" value="tRNA uridine 5-carboxymethylaminomethyl modification enzyme MnmG"/>
    <property type="match status" value="1"/>
</dbReference>
<dbReference type="FunFam" id="3.50.50.60:FF:000063">
    <property type="entry name" value="tRNA uridine 5-carboxymethylaminomethyl modification enzyme MnmG"/>
    <property type="match status" value="1"/>
</dbReference>
<dbReference type="Gene3D" id="3.50.50.60">
    <property type="entry name" value="FAD/NAD(P)-binding domain"/>
    <property type="match status" value="2"/>
</dbReference>
<dbReference type="Gene3D" id="1.10.150.570">
    <property type="entry name" value="GidA associated domain, C-terminal subdomain"/>
    <property type="match status" value="1"/>
</dbReference>
<dbReference type="Gene3D" id="1.10.10.1800">
    <property type="entry name" value="tRNA uridine 5-carboxymethylaminomethyl modification enzyme MnmG/GidA"/>
    <property type="match status" value="1"/>
</dbReference>
<dbReference type="HAMAP" id="MF_00129">
    <property type="entry name" value="MnmG_GidA"/>
    <property type="match status" value="1"/>
</dbReference>
<dbReference type="InterPro" id="IPR036188">
    <property type="entry name" value="FAD/NAD-bd_sf"/>
</dbReference>
<dbReference type="InterPro" id="IPR049312">
    <property type="entry name" value="GIDA_C_N"/>
</dbReference>
<dbReference type="InterPro" id="IPR004416">
    <property type="entry name" value="MnmG"/>
</dbReference>
<dbReference type="InterPro" id="IPR002218">
    <property type="entry name" value="MnmG-rel"/>
</dbReference>
<dbReference type="InterPro" id="IPR020595">
    <property type="entry name" value="MnmG-rel_CS"/>
</dbReference>
<dbReference type="InterPro" id="IPR026904">
    <property type="entry name" value="MnmG_C"/>
</dbReference>
<dbReference type="InterPro" id="IPR047001">
    <property type="entry name" value="MnmG_C_subdom"/>
</dbReference>
<dbReference type="InterPro" id="IPR044920">
    <property type="entry name" value="MnmG_C_subdom_sf"/>
</dbReference>
<dbReference type="InterPro" id="IPR040131">
    <property type="entry name" value="MnmG_N"/>
</dbReference>
<dbReference type="NCBIfam" id="TIGR00136">
    <property type="entry name" value="mnmG_gidA"/>
    <property type="match status" value="1"/>
</dbReference>
<dbReference type="PANTHER" id="PTHR11806">
    <property type="entry name" value="GLUCOSE INHIBITED DIVISION PROTEIN A"/>
    <property type="match status" value="1"/>
</dbReference>
<dbReference type="PANTHER" id="PTHR11806:SF0">
    <property type="entry name" value="PROTEIN MTO1 HOMOLOG, MITOCHONDRIAL"/>
    <property type="match status" value="1"/>
</dbReference>
<dbReference type="Pfam" id="PF01134">
    <property type="entry name" value="GIDA"/>
    <property type="match status" value="1"/>
</dbReference>
<dbReference type="Pfam" id="PF21680">
    <property type="entry name" value="GIDA_C_1st"/>
    <property type="match status" value="1"/>
</dbReference>
<dbReference type="Pfam" id="PF13932">
    <property type="entry name" value="SAM_GIDA_C"/>
    <property type="match status" value="1"/>
</dbReference>
<dbReference type="PRINTS" id="PR00411">
    <property type="entry name" value="PNDRDTASEI"/>
</dbReference>
<dbReference type="SMART" id="SM01228">
    <property type="entry name" value="GIDA_assoc_3"/>
    <property type="match status" value="1"/>
</dbReference>
<dbReference type="SUPFAM" id="SSF51905">
    <property type="entry name" value="FAD/NAD(P)-binding domain"/>
    <property type="match status" value="1"/>
</dbReference>
<dbReference type="PROSITE" id="PS01280">
    <property type="entry name" value="GIDA_1"/>
    <property type="match status" value="1"/>
</dbReference>
<dbReference type="PROSITE" id="PS01281">
    <property type="entry name" value="GIDA_2"/>
    <property type="match status" value="1"/>
</dbReference>
<name>MNMG_LISMO</name>
<protein>
    <recommendedName>
        <fullName evidence="1">tRNA uridine 5-carboxymethylaminomethyl modification enzyme MnmG</fullName>
    </recommendedName>
    <alternativeName>
        <fullName evidence="1">Glucose-inhibited division protein A</fullName>
    </alternativeName>
</protein>
<evidence type="ECO:0000255" key="1">
    <source>
        <dbReference type="HAMAP-Rule" id="MF_00129"/>
    </source>
</evidence>
<evidence type="ECO:0000256" key="2">
    <source>
        <dbReference type="SAM" id="MobiDB-lite"/>
    </source>
</evidence>
<feature type="chain" id="PRO_0000117126" description="tRNA uridine 5-carboxymethylaminomethyl modification enzyme MnmG">
    <location>
        <begin position="1"/>
        <end position="629"/>
    </location>
</feature>
<feature type="region of interest" description="Disordered" evidence="2">
    <location>
        <begin position="203"/>
        <end position="226"/>
    </location>
</feature>
<feature type="compositionally biased region" description="Basic and acidic residues" evidence="2">
    <location>
        <begin position="215"/>
        <end position="226"/>
    </location>
</feature>
<feature type="binding site" evidence="1">
    <location>
        <begin position="15"/>
        <end position="20"/>
    </location>
    <ligand>
        <name>FAD</name>
        <dbReference type="ChEBI" id="CHEBI:57692"/>
    </ligand>
</feature>
<feature type="binding site" evidence="1">
    <location>
        <position position="127"/>
    </location>
    <ligand>
        <name>FAD</name>
        <dbReference type="ChEBI" id="CHEBI:57692"/>
    </ligand>
</feature>
<feature type="binding site" evidence="1">
    <location>
        <position position="182"/>
    </location>
    <ligand>
        <name>FAD</name>
        <dbReference type="ChEBI" id="CHEBI:57692"/>
    </ligand>
</feature>
<feature type="binding site" evidence="1">
    <location>
        <begin position="274"/>
        <end position="288"/>
    </location>
    <ligand>
        <name>NAD(+)</name>
        <dbReference type="ChEBI" id="CHEBI:57540"/>
    </ligand>
</feature>
<feature type="binding site" evidence="1">
    <location>
        <position position="371"/>
    </location>
    <ligand>
        <name>FAD</name>
        <dbReference type="ChEBI" id="CHEBI:57692"/>
    </ligand>
</feature>
<organism>
    <name type="scientific">Listeria monocytogenes serovar 1/2a (strain ATCC BAA-679 / EGD-e)</name>
    <dbReference type="NCBI Taxonomy" id="169963"/>
    <lineage>
        <taxon>Bacteria</taxon>
        <taxon>Bacillati</taxon>
        <taxon>Bacillota</taxon>
        <taxon>Bacilli</taxon>
        <taxon>Bacillales</taxon>
        <taxon>Listeriaceae</taxon>
        <taxon>Listeria</taxon>
    </lineage>
</organism>
<gene>
    <name evidence="1" type="primary">mnmG</name>
    <name evidence="1" type="synonym">gidA</name>
    <name type="ordered locus">lmo2810</name>
</gene>
<accession>Q8Y3M5</accession>
<reference key="1">
    <citation type="journal article" date="2001" name="Science">
        <title>Comparative genomics of Listeria species.</title>
        <authorList>
            <person name="Glaser P."/>
            <person name="Frangeul L."/>
            <person name="Buchrieser C."/>
            <person name="Rusniok C."/>
            <person name="Amend A."/>
            <person name="Baquero F."/>
            <person name="Berche P."/>
            <person name="Bloecker H."/>
            <person name="Brandt P."/>
            <person name="Chakraborty T."/>
            <person name="Charbit A."/>
            <person name="Chetouani F."/>
            <person name="Couve E."/>
            <person name="de Daruvar A."/>
            <person name="Dehoux P."/>
            <person name="Domann E."/>
            <person name="Dominguez-Bernal G."/>
            <person name="Duchaud E."/>
            <person name="Durant L."/>
            <person name="Dussurget O."/>
            <person name="Entian K.-D."/>
            <person name="Fsihi H."/>
            <person name="Garcia-del Portillo F."/>
            <person name="Garrido P."/>
            <person name="Gautier L."/>
            <person name="Goebel W."/>
            <person name="Gomez-Lopez N."/>
            <person name="Hain T."/>
            <person name="Hauf J."/>
            <person name="Jackson D."/>
            <person name="Jones L.-M."/>
            <person name="Kaerst U."/>
            <person name="Kreft J."/>
            <person name="Kuhn M."/>
            <person name="Kunst F."/>
            <person name="Kurapkat G."/>
            <person name="Madueno E."/>
            <person name="Maitournam A."/>
            <person name="Mata Vicente J."/>
            <person name="Ng E."/>
            <person name="Nedjari H."/>
            <person name="Nordsiek G."/>
            <person name="Novella S."/>
            <person name="de Pablos B."/>
            <person name="Perez-Diaz J.-C."/>
            <person name="Purcell R."/>
            <person name="Remmel B."/>
            <person name="Rose M."/>
            <person name="Schlueter T."/>
            <person name="Simoes N."/>
            <person name="Tierrez A."/>
            <person name="Vazquez-Boland J.-A."/>
            <person name="Voss H."/>
            <person name="Wehland J."/>
            <person name="Cossart P."/>
        </authorList>
    </citation>
    <scope>NUCLEOTIDE SEQUENCE [LARGE SCALE GENOMIC DNA]</scope>
    <source>
        <strain>ATCC BAA-679 / EGD-e</strain>
    </source>
</reference>
<proteinExistence type="inferred from homology"/>
<comment type="function">
    <text evidence="1">NAD-binding protein involved in the addition of a carboxymethylaminomethyl (cmnm) group at the wobble position (U34) of certain tRNAs, forming tRNA-cmnm(5)s(2)U34.</text>
</comment>
<comment type="cofactor">
    <cofactor evidence="1">
        <name>FAD</name>
        <dbReference type="ChEBI" id="CHEBI:57692"/>
    </cofactor>
</comment>
<comment type="subunit">
    <text evidence="1">Homodimer. Heterotetramer of two MnmE and two MnmG subunits.</text>
</comment>
<comment type="subcellular location">
    <subcellularLocation>
        <location evidence="1">Cytoplasm</location>
    </subcellularLocation>
</comment>
<comment type="similarity">
    <text evidence="1">Belongs to the MnmG family.</text>
</comment>